<comment type="function">
    <text evidence="1">Produces ATP from ADP in the presence of a proton gradient across the membrane. The alpha chain is a regulatory subunit.</text>
</comment>
<comment type="catalytic activity">
    <reaction evidence="1">
        <text>ATP + H2O + 4 H(+)(in) = ADP + phosphate + 5 H(+)(out)</text>
        <dbReference type="Rhea" id="RHEA:57720"/>
        <dbReference type="ChEBI" id="CHEBI:15377"/>
        <dbReference type="ChEBI" id="CHEBI:15378"/>
        <dbReference type="ChEBI" id="CHEBI:30616"/>
        <dbReference type="ChEBI" id="CHEBI:43474"/>
        <dbReference type="ChEBI" id="CHEBI:456216"/>
        <dbReference type="EC" id="7.1.2.2"/>
    </reaction>
</comment>
<comment type="subunit">
    <text evidence="1">F-type ATPases have 2 components, CF(1) - the catalytic core - and CF(0) - the membrane proton channel. CF(1) has five subunits: alpha(3), beta(3), gamma(1), delta(1), epsilon(1). CF(0) has three main subunits: a(1), b(2) and c(9-12). The alpha and beta chains form an alternating ring which encloses part of the gamma chain. CF(1) is attached to CF(0) by a central stalk formed by the gamma and epsilon chains, while a peripheral stalk is formed by the delta and b chains.</text>
</comment>
<comment type="subcellular location">
    <subcellularLocation>
        <location evidence="1">Cell inner membrane</location>
        <topology evidence="1">Peripheral membrane protein</topology>
    </subcellularLocation>
</comment>
<comment type="similarity">
    <text evidence="1">Belongs to the ATPase alpha/beta chains family.</text>
</comment>
<reference key="1">
    <citation type="journal article" date="2016" name="Front. Microbiol.">
        <title>The complete genome sequence of hyperthermophile Dictyoglomus turgidum DSM 6724 reveals a specialized carbohydrate fermentor.</title>
        <authorList>
            <person name="Brumm P.J."/>
            <person name="Gowda K."/>
            <person name="Robb F.T."/>
            <person name="Mead D.A."/>
        </authorList>
    </citation>
    <scope>NUCLEOTIDE SEQUENCE [LARGE SCALE GENOMIC DNA]</scope>
    <source>
        <strain>DSM 6724 / Z-1310</strain>
    </source>
</reference>
<proteinExistence type="inferred from homology"/>
<sequence>MKEEVLGLPIDKIEKKIKEYDFSPRISNIGYVKHVGDGVAEVSLLNSAFIGEMVVFESGIQGMVLSLKEDSVGVILFGKDEYVKEGDVVYSTSKILQVPTGNGFLGRVIDPLGNPIDGGGLIFPEAYVPIDNEAPSIFDREPVKEPLYTGIRTIDALIPIGHGQRELILGDRQTGKTTIALDTIISQKNYGTICIYVAIAQKRTNIARIVQTLREYGALSNTIVIATFPDEPPALRYIAPMAGCAMGEYFMRQGERVLIVYDDLTKHANTYREVALLLRRVPGREAYPGDIFYLHAHLLERAAKLNKRLGGGALTALPIAETLSGEISTYIPTNLISITDGQIYLDTNLFNAGIRPAINVGLSVSRVGGSAQPKGMRQVAGRLRLDLAQYREYAMFLEFGTELDMATKKKIERGRRVEELLKQGAHEVQPIEEQIISFYLANGGFLDNYPVEKVKDVVIKYIAYLKLKYSSVLTFLREELQLSDQIIYQLHNIFQEFEKEVYANSTGS</sequence>
<accession>B8DYT2</accession>
<name>ATPA_DICTD</name>
<gene>
    <name evidence="1" type="primary">atpA</name>
    <name type="ordered locus">Dtur_0132</name>
</gene>
<dbReference type="EC" id="7.1.2.2" evidence="1"/>
<dbReference type="EMBL" id="CP001251">
    <property type="protein sequence ID" value="ACK41464.1"/>
    <property type="molecule type" value="Genomic_DNA"/>
</dbReference>
<dbReference type="RefSeq" id="WP_012582549.1">
    <property type="nucleotide sequence ID" value="NC_011661.1"/>
</dbReference>
<dbReference type="RefSeq" id="YP_002352078.1">
    <property type="nucleotide sequence ID" value="NC_011661.1"/>
</dbReference>
<dbReference type="SMR" id="B8DYT2"/>
<dbReference type="FunCoup" id="B8DYT2">
    <property type="interactions" value="336"/>
</dbReference>
<dbReference type="STRING" id="515635.Dtur_0132"/>
<dbReference type="EnsemblBacteria" id="ACK41464">
    <property type="protein sequence ID" value="ACK41464"/>
    <property type="gene ID" value="Dtur_0132"/>
</dbReference>
<dbReference type="KEGG" id="dtu:Dtur_0132"/>
<dbReference type="PATRIC" id="fig|515635.4.peg.137"/>
<dbReference type="eggNOG" id="COG0056">
    <property type="taxonomic scope" value="Bacteria"/>
</dbReference>
<dbReference type="HOGENOM" id="CLU_010091_2_1_0"/>
<dbReference type="InParanoid" id="B8DYT2"/>
<dbReference type="OrthoDB" id="9803053at2"/>
<dbReference type="Proteomes" id="UP000007719">
    <property type="component" value="Chromosome"/>
</dbReference>
<dbReference type="GO" id="GO:0005886">
    <property type="term" value="C:plasma membrane"/>
    <property type="evidence" value="ECO:0007669"/>
    <property type="project" value="UniProtKB-SubCell"/>
</dbReference>
<dbReference type="GO" id="GO:0045259">
    <property type="term" value="C:proton-transporting ATP synthase complex"/>
    <property type="evidence" value="ECO:0007669"/>
    <property type="project" value="UniProtKB-KW"/>
</dbReference>
<dbReference type="GO" id="GO:0043531">
    <property type="term" value="F:ADP binding"/>
    <property type="evidence" value="ECO:0000318"/>
    <property type="project" value="GO_Central"/>
</dbReference>
<dbReference type="GO" id="GO:0005524">
    <property type="term" value="F:ATP binding"/>
    <property type="evidence" value="ECO:0000318"/>
    <property type="project" value="GO_Central"/>
</dbReference>
<dbReference type="GO" id="GO:0046933">
    <property type="term" value="F:proton-transporting ATP synthase activity, rotational mechanism"/>
    <property type="evidence" value="ECO:0007669"/>
    <property type="project" value="UniProtKB-UniRule"/>
</dbReference>
<dbReference type="GO" id="GO:0015986">
    <property type="term" value="P:proton motive force-driven ATP synthesis"/>
    <property type="evidence" value="ECO:0000318"/>
    <property type="project" value="GO_Central"/>
</dbReference>
<dbReference type="CDD" id="cd18113">
    <property type="entry name" value="ATP-synt_F1_alpha_C"/>
    <property type="match status" value="1"/>
</dbReference>
<dbReference type="CDD" id="cd18116">
    <property type="entry name" value="ATP-synt_F1_alpha_N"/>
    <property type="match status" value="1"/>
</dbReference>
<dbReference type="CDD" id="cd01132">
    <property type="entry name" value="F1-ATPase_alpha_CD"/>
    <property type="match status" value="1"/>
</dbReference>
<dbReference type="FunFam" id="1.20.150.20:FF:000001">
    <property type="entry name" value="ATP synthase subunit alpha"/>
    <property type="match status" value="1"/>
</dbReference>
<dbReference type="FunFam" id="3.40.50.300:FF:000002">
    <property type="entry name" value="ATP synthase subunit alpha"/>
    <property type="match status" value="1"/>
</dbReference>
<dbReference type="Gene3D" id="2.40.30.20">
    <property type="match status" value="1"/>
</dbReference>
<dbReference type="Gene3D" id="1.20.150.20">
    <property type="entry name" value="ATP synthase alpha/beta chain, C-terminal domain"/>
    <property type="match status" value="1"/>
</dbReference>
<dbReference type="Gene3D" id="3.40.50.300">
    <property type="entry name" value="P-loop containing nucleotide triphosphate hydrolases"/>
    <property type="match status" value="1"/>
</dbReference>
<dbReference type="HAMAP" id="MF_01346">
    <property type="entry name" value="ATP_synth_alpha_bact"/>
    <property type="match status" value="1"/>
</dbReference>
<dbReference type="InterPro" id="IPR023366">
    <property type="entry name" value="ATP_synth_asu-like_sf"/>
</dbReference>
<dbReference type="InterPro" id="IPR000793">
    <property type="entry name" value="ATP_synth_asu_C"/>
</dbReference>
<dbReference type="InterPro" id="IPR038376">
    <property type="entry name" value="ATP_synth_asu_C_sf"/>
</dbReference>
<dbReference type="InterPro" id="IPR033732">
    <property type="entry name" value="ATP_synth_F1_a_nt-bd_dom"/>
</dbReference>
<dbReference type="InterPro" id="IPR005294">
    <property type="entry name" value="ATP_synth_F1_asu"/>
</dbReference>
<dbReference type="InterPro" id="IPR020003">
    <property type="entry name" value="ATPase_a/bsu_AS"/>
</dbReference>
<dbReference type="InterPro" id="IPR004100">
    <property type="entry name" value="ATPase_F1/V1/A1_a/bsu_N"/>
</dbReference>
<dbReference type="InterPro" id="IPR036121">
    <property type="entry name" value="ATPase_F1/V1/A1_a/bsu_N_sf"/>
</dbReference>
<dbReference type="InterPro" id="IPR000194">
    <property type="entry name" value="ATPase_F1/V1/A1_a/bsu_nucl-bd"/>
</dbReference>
<dbReference type="InterPro" id="IPR027417">
    <property type="entry name" value="P-loop_NTPase"/>
</dbReference>
<dbReference type="NCBIfam" id="TIGR00962">
    <property type="entry name" value="atpA"/>
    <property type="match status" value="1"/>
</dbReference>
<dbReference type="NCBIfam" id="NF009884">
    <property type="entry name" value="PRK13343.1"/>
    <property type="match status" value="1"/>
</dbReference>
<dbReference type="PANTHER" id="PTHR48082">
    <property type="entry name" value="ATP SYNTHASE SUBUNIT ALPHA, MITOCHONDRIAL"/>
    <property type="match status" value="1"/>
</dbReference>
<dbReference type="PANTHER" id="PTHR48082:SF2">
    <property type="entry name" value="ATP SYNTHASE SUBUNIT ALPHA, MITOCHONDRIAL"/>
    <property type="match status" value="1"/>
</dbReference>
<dbReference type="Pfam" id="PF00006">
    <property type="entry name" value="ATP-synt_ab"/>
    <property type="match status" value="1"/>
</dbReference>
<dbReference type="Pfam" id="PF00306">
    <property type="entry name" value="ATP-synt_ab_C"/>
    <property type="match status" value="1"/>
</dbReference>
<dbReference type="Pfam" id="PF02874">
    <property type="entry name" value="ATP-synt_ab_N"/>
    <property type="match status" value="1"/>
</dbReference>
<dbReference type="SUPFAM" id="SSF47917">
    <property type="entry name" value="C-terminal domain of alpha and beta subunits of F1 ATP synthase"/>
    <property type="match status" value="1"/>
</dbReference>
<dbReference type="SUPFAM" id="SSF50615">
    <property type="entry name" value="N-terminal domain of alpha and beta subunits of F1 ATP synthase"/>
    <property type="match status" value="1"/>
</dbReference>
<dbReference type="SUPFAM" id="SSF52540">
    <property type="entry name" value="P-loop containing nucleoside triphosphate hydrolases"/>
    <property type="match status" value="1"/>
</dbReference>
<dbReference type="PROSITE" id="PS00152">
    <property type="entry name" value="ATPASE_ALPHA_BETA"/>
    <property type="match status" value="1"/>
</dbReference>
<protein>
    <recommendedName>
        <fullName evidence="1">ATP synthase subunit alpha</fullName>
        <ecNumber evidence="1">7.1.2.2</ecNumber>
    </recommendedName>
    <alternativeName>
        <fullName evidence="1">ATP synthase F1 sector subunit alpha</fullName>
    </alternativeName>
    <alternativeName>
        <fullName evidence="1">F-ATPase subunit alpha</fullName>
    </alternativeName>
</protein>
<organism>
    <name type="scientific">Dictyoglomus turgidum (strain DSM 6724 / Z-1310)</name>
    <dbReference type="NCBI Taxonomy" id="515635"/>
    <lineage>
        <taxon>Bacteria</taxon>
        <taxon>Pseudomonadati</taxon>
        <taxon>Dictyoglomota</taxon>
        <taxon>Dictyoglomia</taxon>
        <taxon>Dictyoglomales</taxon>
        <taxon>Dictyoglomaceae</taxon>
        <taxon>Dictyoglomus</taxon>
    </lineage>
</organism>
<keyword id="KW-0066">ATP synthesis</keyword>
<keyword id="KW-0067">ATP-binding</keyword>
<keyword id="KW-0997">Cell inner membrane</keyword>
<keyword id="KW-1003">Cell membrane</keyword>
<keyword id="KW-0139">CF(1)</keyword>
<keyword id="KW-0375">Hydrogen ion transport</keyword>
<keyword id="KW-0406">Ion transport</keyword>
<keyword id="KW-0472">Membrane</keyword>
<keyword id="KW-0547">Nucleotide-binding</keyword>
<keyword id="KW-1185">Reference proteome</keyword>
<keyword id="KW-1278">Translocase</keyword>
<keyword id="KW-0813">Transport</keyword>
<feature type="chain" id="PRO_1000143371" description="ATP synthase subunit alpha">
    <location>
        <begin position="1"/>
        <end position="508"/>
    </location>
</feature>
<feature type="binding site" evidence="1">
    <location>
        <begin position="170"/>
        <end position="177"/>
    </location>
    <ligand>
        <name>ATP</name>
        <dbReference type="ChEBI" id="CHEBI:30616"/>
    </ligand>
</feature>
<feature type="site" description="Required for activity" evidence="1">
    <location>
        <position position="363"/>
    </location>
</feature>
<evidence type="ECO:0000255" key="1">
    <source>
        <dbReference type="HAMAP-Rule" id="MF_01346"/>
    </source>
</evidence>